<dbReference type="EC" id="2.4.1.-" evidence="4"/>
<dbReference type="EMBL" id="FJ854497">
    <property type="protein sequence ID" value="ACZ44839.1"/>
    <property type="molecule type" value="mRNA"/>
</dbReference>
<dbReference type="SMR" id="D3UAG4"/>
<dbReference type="CAZy" id="GT1">
    <property type="family name" value="Glycosyltransferase Family 1"/>
</dbReference>
<dbReference type="GO" id="GO:0035251">
    <property type="term" value="F:UDP-glucosyltransferase activity"/>
    <property type="evidence" value="ECO:0007669"/>
    <property type="project" value="InterPro"/>
</dbReference>
<dbReference type="CDD" id="cd03784">
    <property type="entry name" value="GT1_Gtf-like"/>
    <property type="match status" value="1"/>
</dbReference>
<dbReference type="FunFam" id="3.40.50.2000:FF:000020">
    <property type="entry name" value="Glycosyltransferase"/>
    <property type="match status" value="1"/>
</dbReference>
<dbReference type="FunFam" id="3.40.50.2000:FF:000095">
    <property type="entry name" value="Glycosyltransferase"/>
    <property type="match status" value="1"/>
</dbReference>
<dbReference type="Gene3D" id="3.40.50.2000">
    <property type="entry name" value="Glycogen Phosphorylase B"/>
    <property type="match status" value="2"/>
</dbReference>
<dbReference type="InterPro" id="IPR050481">
    <property type="entry name" value="UDP-glycosyltransf_plant"/>
</dbReference>
<dbReference type="InterPro" id="IPR002213">
    <property type="entry name" value="UDP_glucos_trans"/>
</dbReference>
<dbReference type="InterPro" id="IPR035595">
    <property type="entry name" value="UDP_glycos_trans_CS"/>
</dbReference>
<dbReference type="PANTHER" id="PTHR48048">
    <property type="entry name" value="GLYCOSYLTRANSFERASE"/>
    <property type="match status" value="1"/>
</dbReference>
<dbReference type="PANTHER" id="PTHR48048:SF20">
    <property type="entry name" value="GLYCOSYLTRANSFERASE"/>
    <property type="match status" value="1"/>
</dbReference>
<dbReference type="Pfam" id="PF00201">
    <property type="entry name" value="UDPGT"/>
    <property type="match status" value="1"/>
</dbReference>
<dbReference type="SUPFAM" id="SSF53756">
    <property type="entry name" value="UDP-Glycosyltransferase/glycogen phosphorylase"/>
    <property type="match status" value="1"/>
</dbReference>
<dbReference type="PROSITE" id="PS00375">
    <property type="entry name" value="UDPGT"/>
    <property type="match status" value="1"/>
</dbReference>
<sequence>MGDVIVLYAAPGMGHIVSMVELGKLIVHRYGPHKFSITILYTCGSVVDITSISAYIRRISHSHPSISFRQFPRVTNKITRNISGAAIMFDFIRQNDPHVRRALQEISKSVAVRAFIIDLFCTSALPIGKEFNIPTYYFYTSGAAALAAFLYFPKIDEQTTESFQDLRDTVFEFPGWKSPLKAIHMVEPVLDRNDPAYSDMIYFCSQLPKSNGIIVNTFEELESSNVLQAIAGGLCVPDGPTPPVYYVGPLIDEEKELSNDAAAAEEEDCLSWLDKQPSRSVLFLCFGSRGSFPAVQLKEIANGLEASGQRFLWVVKKPPVEEKTKQVHGVDDFDLKGVLPEGFLERTADRGMVVKSWAPQVVVLKKESVGGFVTHCGWNSVLEAVVAGVPMIAWPLYAEQHMNRNVLVTDMEIAIGVEQRDEEDGFVSGEEVERRVRELMESEGGRVLRERCKKIGEMALAALGETGSSTRNFVNFVSSIT</sequence>
<accession>D3UAG4</accession>
<proteinExistence type="evidence at transcript level"/>
<comment type="function">
    <text evidence="1">Glycosyltransferase that may possess chalcone and dihydrochalcone 2'-O-glucosyltransferase activity.</text>
</comment>
<comment type="similarity">
    <text evidence="4">Belongs to the UDP-glycosyltransferase family.</text>
</comment>
<feature type="chain" id="PRO_0000434455" description="UDP-glycosyltransferase 88F4">
    <location>
        <begin position="1"/>
        <end position="481"/>
    </location>
</feature>
<feature type="binding site" evidence="2">
    <location>
        <position position="288"/>
    </location>
    <ligand>
        <name>UDP-alpha-D-glucose</name>
        <dbReference type="ChEBI" id="CHEBI:58885"/>
    </ligand>
</feature>
<feature type="binding site" evidence="2">
    <location>
        <begin position="357"/>
        <end position="358"/>
    </location>
    <ligand>
        <name>UDP-alpha-D-glucose</name>
        <dbReference type="ChEBI" id="CHEBI:58885"/>
    </ligand>
</feature>
<feature type="binding site" evidence="2">
    <location>
        <begin position="375"/>
        <end position="383"/>
    </location>
    <ligand>
        <name>UDP-alpha-D-glucose</name>
        <dbReference type="ChEBI" id="CHEBI:58885"/>
    </ligand>
</feature>
<feature type="binding site" evidence="2">
    <location>
        <begin position="397"/>
        <end position="400"/>
    </location>
    <ligand>
        <name>UDP-alpha-D-glucose</name>
        <dbReference type="ChEBI" id="CHEBI:58885"/>
    </ligand>
</feature>
<keyword id="KW-0328">Glycosyltransferase</keyword>
<keyword id="KW-0808">Transferase</keyword>
<protein>
    <recommendedName>
        <fullName evidence="3">UDP-glycosyltransferase 88F4</fullName>
        <ecNumber evidence="4">2.4.1.-</ecNumber>
    </recommendedName>
    <alternativeName>
        <fullName evidence="4">UDP-glucose:chalcone 2'-O-glucosyltransferase</fullName>
    </alternativeName>
</protein>
<evidence type="ECO:0000250" key="1">
    <source>
        <dbReference type="UniProtKB" id="B3TKC8"/>
    </source>
</evidence>
<evidence type="ECO:0000250" key="2">
    <source>
        <dbReference type="UniProtKB" id="Q9M156"/>
    </source>
</evidence>
<evidence type="ECO:0000303" key="3">
    <source ref="1"/>
</evidence>
<evidence type="ECO:0000305" key="4"/>
<organism>
    <name type="scientific">Malus domestica</name>
    <name type="common">Apple</name>
    <name type="synonym">Pyrus malus</name>
    <dbReference type="NCBI Taxonomy" id="3750"/>
    <lineage>
        <taxon>Eukaryota</taxon>
        <taxon>Viridiplantae</taxon>
        <taxon>Streptophyta</taxon>
        <taxon>Embryophyta</taxon>
        <taxon>Tracheophyta</taxon>
        <taxon>Spermatophyta</taxon>
        <taxon>Magnoliopsida</taxon>
        <taxon>eudicotyledons</taxon>
        <taxon>Gunneridae</taxon>
        <taxon>Pentapetalae</taxon>
        <taxon>rosids</taxon>
        <taxon>fabids</taxon>
        <taxon>Rosales</taxon>
        <taxon>Rosaceae</taxon>
        <taxon>Amygdaloideae</taxon>
        <taxon>Maleae</taxon>
        <taxon>Malus</taxon>
    </lineage>
</organism>
<name>U88F4_MALDO</name>
<gene>
    <name evidence="3" type="primary">UGT88F4</name>
</gene>
<reference key="1">
    <citation type="journal article" date="2010" name="Plant Sci.">
        <title>Cloning and heterologous expression of glycosyltransferases from Malus x domestica and Pyrus communis, which convert phloretin to phloretin 2'-O-glucoside (phloridzin).</title>
        <authorList>
            <person name="Gosch C."/>
            <person name="Halbwirth H."/>
            <person name="Schneider B."/>
            <person name="Holscher D."/>
            <person name="Stich K."/>
        </authorList>
    </citation>
    <scope>NUCLEOTIDE SEQUENCE [MRNA]</scope>
    <source>
        <strain>cv. Rebella</strain>
    </source>
</reference>